<organism>
    <name type="scientific">Paracoccidioides brasiliensis (strain Pb03)</name>
    <dbReference type="NCBI Taxonomy" id="482561"/>
    <lineage>
        <taxon>Eukaryota</taxon>
        <taxon>Fungi</taxon>
        <taxon>Dikarya</taxon>
        <taxon>Ascomycota</taxon>
        <taxon>Pezizomycotina</taxon>
        <taxon>Eurotiomycetes</taxon>
        <taxon>Eurotiomycetidae</taxon>
        <taxon>Onygenales</taxon>
        <taxon>Ajellomycetaceae</taxon>
        <taxon>Paracoccidioides</taxon>
    </lineage>
</organism>
<name>RSSA_PARBP</name>
<reference key="1">
    <citation type="journal article" date="2011" name="PLoS Genet.">
        <title>Comparative genomic analysis of human fungal pathogens causing paracoccidioidomycosis.</title>
        <authorList>
            <person name="Desjardins C.A."/>
            <person name="Champion M.D."/>
            <person name="Holder J.W."/>
            <person name="Muszewska A."/>
            <person name="Goldberg J."/>
            <person name="Bailao A.M."/>
            <person name="Brigido M.M."/>
            <person name="Ferreira M.E."/>
            <person name="Garcia A.M."/>
            <person name="Grynberg M."/>
            <person name="Gujja S."/>
            <person name="Heiman D.I."/>
            <person name="Henn M.R."/>
            <person name="Kodira C.D."/>
            <person name="Leon-Narvaez H."/>
            <person name="Longo L.V.G."/>
            <person name="Ma L.-J."/>
            <person name="Malavazi I."/>
            <person name="Matsuo A.L."/>
            <person name="Morais F.V."/>
            <person name="Pereira M."/>
            <person name="Rodriguez-Brito S."/>
            <person name="Sakthikumar S."/>
            <person name="Salem-Izacc S.M."/>
            <person name="Sykes S.M."/>
            <person name="Teixeira M.M."/>
            <person name="Vallejo M.C."/>
            <person name="Walter M.E."/>
            <person name="Yandava C."/>
            <person name="Young S."/>
            <person name="Zeng Q."/>
            <person name="Zucker J."/>
            <person name="Felipe M.S."/>
            <person name="Goldman G.H."/>
            <person name="Haas B.J."/>
            <person name="McEwen J.G."/>
            <person name="Nino-Vega G."/>
            <person name="Puccia R."/>
            <person name="San-Blas G."/>
            <person name="Soares C.M."/>
            <person name="Birren B.W."/>
            <person name="Cuomo C.A."/>
        </authorList>
    </citation>
    <scope>NUCLEOTIDE SEQUENCE [LARGE SCALE GENOMIC DNA]</scope>
    <source>
        <strain>Pb03</strain>
    </source>
</reference>
<comment type="function">
    <text evidence="1">Required for the assembly and/or stability of the 40S ribosomal subunit. Required for the processing of the 20S rRNA-precursor to mature 18S rRNA in a late step of the maturation of 40S ribosomal subunits.</text>
</comment>
<comment type="subunit">
    <text evidence="1">Component of the small ribosomal subunit. Mature ribosomes consist of a small (40S) and a large (60S) subunit. The 40S subunit contains about 33 different proteins and 1 molecule of RNA (18S). The 60S subunit contains about 49 different proteins and 3 molecules of RNA (25S, 5.8S and 5S). Interacts with RPS21.</text>
</comment>
<comment type="subcellular location">
    <subcellularLocation>
        <location evidence="1">Cytoplasm</location>
    </subcellularLocation>
</comment>
<comment type="similarity">
    <text evidence="1">Belongs to the universal ribosomal protein uS2 family.</text>
</comment>
<feature type="chain" id="PRO_0000389282" description="Small ribosomal subunit protein uS2">
    <location>
        <begin position="1"/>
        <end position="295"/>
    </location>
</feature>
<gene>
    <name evidence="1" type="primary">RPS0</name>
    <name type="ORF">PABG_02356</name>
</gene>
<keyword id="KW-0963">Cytoplasm</keyword>
<keyword id="KW-0687">Ribonucleoprotein</keyword>
<keyword id="KW-0689">Ribosomal protein</keyword>
<proteinExistence type="inferred from homology"/>
<accession>C0S3U2</accession>
<evidence type="ECO:0000255" key="1">
    <source>
        <dbReference type="HAMAP-Rule" id="MF_03015"/>
    </source>
</evidence>
<evidence type="ECO:0000305" key="2"/>
<dbReference type="EMBL" id="KN305533">
    <property type="protein sequence ID" value="EEH20097.1"/>
    <property type="molecule type" value="Genomic_DNA"/>
</dbReference>
<dbReference type="SMR" id="C0S3U2"/>
<dbReference type="VEuPathDB" id="FungiDB:PABG_02356"/>
<dbReference type="HOGENOM" id="CLU_058171_0_1_1"/>
<dbReference type="OrthoDB" id="36647at33183"/>
<dbReference type="GO" id="GO:0022627">
    <property type="term" value="C:cytosolic small ribosomal subunit"/>
    <property type="evidence" value="ECO:0007669"/>
    <property type="project" value="UniProtKB-UniRule"/>
</dbReference>
<dbReference type="GO" id="GO:0003735">
    <property type="term" value="F:structural constituent of ribosome"/>
    <property type="evidence" value="ECO:0007669"/>
    <property type="project" value="UniProtKB-UniRule"/>
</dbReference>
<dbReference type="GO" id="GO:0000028">
    <property type="term" value="P:ribosomal small subunit assembly"/>
    <property type="evidence" value="ECO:0007669"/>
    <property type="project" value="UniProtKB-UniRule"/>
</dbReference>
<dbReference type="GO" id="GO:0006412">
    <property type="term" value="P:translation"/>
    <property type="evidence" value="ECO:0007669"/>
    <property type="project" value="UniProtKB-UniRule"/>
</dbReference>
<dbReference type="CDD" id="cd01425">
    <property type="entry name" value="RPS2"/>
    <property type="match status" value="1"/>
</dbReference>
<dbReference type="FunFam" id="3.40.50.10490:FF:000010">
    <property type="entry name" value="40S ribosomal protein S0"/>
    <property type="match status" value="1"/>
</dbReference>
<dbReference type="Gene3D" id="3.40.50.10490">
    <property type="entry name" value="Glucose-6-phosphate isomerase like protein, domain 1"/>
    <property type="match status" value="1"/>
</dbReference>
<dbReference type="HAMAP" id="MF_03015">
    <property type="entry name" value="Ribosomal_S2_euk"/>
    <property type="match status" value="1"/>
</dbReference>
<dbReference type="InterPro" id="IPR001865">
    <property type="entry name" value="Ribosomal_uS2"/>
</dbReference>
<dbReference type="InterPro" id="IPR032281">
    <property type="entry name" value="Ribosomal_uS2_C"/>
</dbReference>
<dbReference type="InterPro" id="IPR018130">
    <property type="entry name" value="Ribosomal_uS2_CS"/>
</dbReference>
<dbReference type="InterPro" id="IPR027498">
    <property type="entry name" value="Ribosomal_uS2_euk"/>
</dbReference>
<dbReference type="InterPro" id="IPR005707">
    <property type="entry name" value="Ribosomal_uS2_euk/arc"/>
</dbReference>
<dbReference type="InterPro" id="IPR023591">
    <property type="entry name" value="Ribosomal_uS2_flav_dom_sf"/>
</dbReference>
<dbReference type="NCBIfam" id="TIGR01012">
    <property type="entry name" value="uS2_euk_arch"/>
    <property type="match status" value="1"/>
</dbReference>
<dbReference type="PANTHER" id="PTHR11489">
    <property type="entry name" value="40S RIBOSOMAL PROTEIN SA"/>
    <property type="match status" value="1"/>
</dbReference>
<dbReference type="Pfam" id="PF16122">
    <property type="entry name" value="40S_SA_C"/>
    <property type="match status" value="1"/>
</dbReference>
<dbReference type="Pfam" id="PF00318">
    <property type="entry name" value="Ribosomal_S2"/>
    <property type="match status" value="2"/>
</dbReference>
<dbReference type="PRINTS" id="PR00395">
    <property type="entry name" value="RIBOSOMALS2"/>
</dbReference>
<dbReference type="SUPFAM" id="SSF52313">
    <property type="entry name" value="Ribosomal protein S2"/>
    <property type="match status" value="1"/>
</dbReference>
<dbReference type="PROSITE" id="PS00963">
    <property type="entry name" value="RIBOSOMAL_S2_2"/>
    <property type="match status" value="1"/>
</dbReference>
<protein>
    <recommendedName>
        <fullName evidence="1">Small ribosomal subunit protein uS2</fullName>
    </recommendedName>
    <alternativeName>
        <fullName evidence="2">40S ribosomal protein S0</fullName>
    </alternativeName>
</protein>
<sequence>MAPSNLPPVFNATSQDIEMLLAAQCHLGSKNLQVHMEPYLWKTRPDGINVINIGKTWEKIVLAARIIAAIDNPADICVISARPYGQRAVLKFAAHTGAVAIAGRFTPGNFTNYITRSFKEPRLIIVTDPRTDSQAIKEASYVNIPVIALCDTDSPTEFVDVAIPTNNKGRHAIGLIWWMLAREVLRLRGTLANRESEWDVVVDLYFYRDPEAEENKEIEETKVPGAEEVGAAAIESGLVGDSWQAQATPGFSAGVAVPGTAVPGWEADVSTDWAASSAPAAETLADPAADPSVKW</sequence>